<organism>
    <name type="scientific">Mycobacterium tuberculosis (strain KZN 1435 / MDR)</name>
    <dbReference type="NCBI Taxonomy" id="478434"/>
    <lineage>
        <taxon>Bacteria</taxon>
        <taxon>Bacillati</taxon>
        <taxon>Actinomycetota</taxon>
        <taxon>Actinomycetes</taxon>
        <taxon>Mycobacteriales</taxon>
        <taxon>Mycobacteriaceae</taxon>
        <taxon>Mycobacterium</taxon>
        <taxon>Mycobacterium tuberculosis complex</taxon>
    </lineage>
</organism>
<dbReference type="EC" id="2.7.7.105" evidence="1"/>
<dbReference type="EMBL" id="CP001658">
    <property type="protein sequence ID" value="ACT24030.1"/>
    <property type="status" value="ALT_INIT"/>
    <property type="molecule type" value="Genomic_DNA"/>
</dbReference>
<dbReference type="SMR" id="C6DW66"/>
<dbReference type="KEGG" id="mtb:TBMG_00986"/>
<dbReference type="PATRIC" id="fig|478434.13.peg.3222"/>
<dbReference type="HOGENOM" id="CLU_076569_0_0_11"/>
<dbReference type="UniPathway" id="UPA00071"/>
<dbReference type="GO" id="GO:0005525">
    <property type="term" value="F:GTP binding"/>
    <property type="evidence" value="ECO:0007669"/>
    <property type="project" value="UniProtKB-KW"/>
</dbReference>
<dbReference type="GO" id="GO:0043814">
    <property type="term" value="F:phospholactate guanylyltransferase activity"/>
    <property type="evidence" value="ECO:0007669"/>
    <property type="project" value="InterPro"/>
</dbReference>
<dbReference type="GO" id="GO:0052645">
    <property type="term" value="P:F420-0 metabolic process"/>
    <property type="evidence" value="ECO:0007669"/>
    <property type="project" value="UniProtKB-UniRule"/>
</dbReference>
<dbReference type="FunFam" id="3.90.550.10:FF:000190">
    <property type="entry name" value="2-phospho-L-lactate guanylyltransferase"/>
    <property type="match status" value="1"/>
</dbReference>
<dbReference type="Gene3D" id="3.90.550.10">
    <property type="entry name" value="Spore Coat Polysaccharide Biosynthesis Protein SpsA, Chain A"/>
    <property type="match status" value="1"/>
</dbReference>
<dbReference type="HAMAP" id="MF_02114">
    <property type="entry name" value="CofC"/>
    <property type="match status" value="1"/>
</dbReference>
<dbReference type="InterPro" id="IPR002835">
    <property type="entry name" value="CofC"/>
</dbReference>
<dbReference type="InterPro" id="IPR029044">
    <property type="entry name" value="Nucleotide-diphossugar_trans"/>
</dbReference>
<dbReference type="NCBIfam" id="TIGR03552">
    <property type="entry name" value="F420_cofC"/>
    <property type="match status" value="1"/>
</dbReference>
<dbReference type="PANTHER" id="PTHR40392">
    <property type="entry name" value="2-PHOSPHO-L-LACTATE GUANYLYLTRANSFERASE"/>
    <property type="match status" value="1"/>
</dbReference>
<dbReference type="PANTHER" id="PTHR40392:SF1">
    <property type="entry name" value="2-PHOSPHO-L-LACTATE GUANYLYLTRANSFERASE"/>
    <property type="match status" value="1"/>
</dbReference>
<dbReference type="Pfam" id="PF01983">
    <property type="entry name" value="CofC"/>
    <property type="match status" value="1"/>
</dbReference>
<dbReference type="SUPFAM" id="SSF53448">
    <property type="entry name" value="Nucleotide-diphospho-sugar transferases"/>
    <property type="match status" value="1"/>
</dbReference>
<reference key="1">
    <citation type="submission" date="2009-07" db="EMBL/GenBank/DDBJ databases">
        <title>The genome sequence of Mycobacterium tuberculosis strain KZN 1435.</title>
        <authorList>
            <person name="Murray M."/>
            <person name="Pillay M."/>
            <person name="Borowsky M.L."/>
            <person name="Young S.K."/>
            <person name="Zeng Q."/>
            <person name="Koehrsen M."/>
            <person name="Alvarado L."/>
            <person name="Berlin A.M."/>
            <person name="Borenstein D."/>
            <person name="Chen Z."/>
            <person name="Engels R."/>
            <person name="Freedman E."/>
            <person name="Gellesch M."/>
            <person name="Goldberg J."/>
            <person name="Griggs A."/>
            <person name="Gujja S."/>
            <person name="Heiman D.I."/>
            <person name="Hepburn T.A."/>
            <person name="Howarth C."/>
            <person name="Jen D."/>
            <person name="Larson L."/>
            <person name="Lewis B."/>
            <person name="Mehta T."/>
            <person name="Park D."/>
            <person name="Pearson M."/>
            <person name="Roberts A."/>
            <person name="Saif S."/>
            <person name="Shea T.D."/>
            <person name="Shenoy N."/>
            <person name="Sisk P."/>
            <person name="Stolte C."/>
            <person name="Sykes S.N."/>
            <person name="Walk T."/>
            <person name="White J."/>
            <person name="Yandava C."/>
            <person name="Haas B."/>
            <person name="Nusbaum C."/>
            <person name="Galagan J."/>
            <person name="Birren B."/>
        </authorList>
    </citation>
    <scope>NUCLEOTIDE SEQUENCE [LARGE SCALE GENOMIC DNA]</scope>
    <source>
        <strain>KZN 1435 / MDR</strain>
    </source>
</reference>
<name>FBID_MYCTK</name>
<accession>C6DW66</accession>
<proteinExistence type="inferred from homology"/>
<gene>
    <name evidence="1" type="primary">fbiD</name>
    <name type="ordered locus">TBMG_00986</name>
</gene>
<protein>
    <recommendedName>
        <fullName evidence="1">Phosphoenolpyruvate guanylyltransferase</fullName>
        <shortName evidence="1">PEP guanylyltransferase</shortName>
        <ecNumber evidence="1">2.7.7.105</ecNumber>
    </recommendedName>
</protein>
<evidence type="ECO:0000255" key="1">
    <source>
        <dbReference type="HAMAP-Rule" id="MF_02114"/>
    </source>
</evidence>
<evidence type="ECO:0000305" key="2"/>
<comment type="function">
    <text evidence="1">Guanylyltransferase that catalyzes the activation of phosphoenolpyruvate (PEP) as enolpyruvoyl-2-diphospho-5'-guanosine, via the condensation of PEP with GTP. It is involved in the biosynthesis of coenzyme F420, a hydride carrier cofactor.</text>
</comment>
<comment type="catalytic activity">
    <reaction evidence="1">
        <text>phosphoenolpyruvate + GTP + H(+) = enolpyruvoyl-2-diphospho-5'-guanosine + diphosphate</text>
        <dbReference type="Rhea" id="RHEA:30519"/>
        <dbReference type="ChEBI" id="CHEBI:15378"/>
        <dbReference type="ChEBI" id="CHEBI:33019"/>
        <dbReference type="ChEBI" id="CHEBI:37565"/>
        <dbReference type="ChEBI" id="CHEBI:58702"/>
        <dbReference type="ChEBI" id="CHEBI:143701"/>
        <dbReference type="EC" id="2.7.7.105"/>
    </reaction>
</comment>
<comment type="pathway">
    <text evidence="1">Cofactor biosynthesis; coenzyme F420 biosynthesis.</text>
</comment>
<comment type="similarity">
    <text evidence="1">Belongs to the CofC family.</text>
</comment>
<comment type="sequence caution" evidence="2">
    <conflict type="erroneous initiation">
        <sequence resource="EMBL-CDS" id="ACT24030"/>
    </conflict>
    <text>Extended N-terminus.</text>
</comment>
<feature type="chain" id="PRO_0000398699" description="Phosphoenolpyruvate guanylyltransferase">
    <location>
        <begin position="1"/>
        <end position="214"/>
    </location>
</feature>
<feature type="binding site" evidence="1">
    <location>
        <position position="148"/>
    </location>
    <ligand>
        <name>phosphoenolpyruvate</name>
        <dbReference type="ChEBI" id="CHEBI:58702"/>
    </ligand>
</feature>
<feature type="binding site" evidence="1">
    <location>
        <position position="163"/>
    </location>
    <ligand>
        <name>phosphoenolpyruvate</name>
        <dbReference type="ChEBI" id="CHEBI:58702"/>
    </ligand>
</feature>
<feature type="binding site" evidence="1">
    <location>
        <position position="166"/>
    </location>
    <ligand>
        <name>phosphoenolpyruvate</name>
        <dbReference type="ChEBI" id="CHEBI:58702"/>
    </ligand>
</feature>
<keyword id="KW-0342">GTP-binding</keyword>
<keyword id="KW-0547">Nucleotide-binding</keyword>
<keyword id="KW-0548">Nucleotidyltransferase</keyword>
<keyword id="KW-0808">Transferase</keyword>
<sequence>MSGTPDDGDIGLIIAVKRLAAAKTRLAPVFSAQTRENVVLAMLVDTLTAAAGVGSLRSITVITPDEAAAAAAAGLGADVLADPTPEDDPDPLNTAITAAERVVAEGASNIVVLQGDLPALQTQELAEAISAARHHRRSFVADRLGTGTAVLCAFGTALHPRFGPDSSARHRRSGAVELTGAWPGLRCDVDTPADLTAARQLGVGPATARAVAHR</sequence>